<reference key="1">
    <citation type="submission" date="2007-08" db="EMBL/GenBank/DDBJ databases">
        <title>Complete sequence of Shewanella sediminis HAW-EB3.</title>
        <authorList>
            <consortium name="US DOE Joint Genome Institute"/>
            <person name="Copeland A."/>
            <person name="Lucas S."/>
            <person name="Lapidus A."/>
            <person name="Barry K."/>
            <person name="Glavina del Rio T."/>
            <person name="Dalin E."/>
            <person name="Tice H."/>
            <person name="Pitluck S."/>
            <person name="Chertkov O."/>
            <person name="Brettin T."/>
            <person name="Bruce D."/>
            <person name="Detter J.C."/>
            <person name="Han C."/>
            <person name="Schmutz J."/>
            <person name="Larimer F."/>
            <person name="Land M."/>
            <person name="Hauser L."/>
            <person name="Kyrpides N."/>
            <person name="Kim E."/>
            <person name="Zhao J.-S."/>
            <person name="Richardson P."/>
        </authorList>
    </citation>
    <scope>NUCLEOTIDE SEQUENCE [LARGE SCALE GENOMIC DNA]</scope>
    <source>
        <strain>HAW-EB3</strain>
    </source>
</reference>
<accession>A8FQM5</accession>
<organism>
    <name type="scientific">Shewanella sediminis (strain HAW-EB3)</name>
    <dbReference type="NCBI Taxonomy" id="425104"/>
    <lineage>
        <taxon>Bacteria</taxon>
        <taxon>Pseudomonadati</taxon>
        <taxon>Pseudomonadota</taxon>
        <taxon>Gammaproteobacteria</taxon>
        <taxon>Alteromonadales</taxon>
        <taxon>Shewanellaceae</taxon>
        <taxon>Shewanella</taxon>
    </lineage>
</organism>
<sequence>MKADIHPAYAEITATCTCGNVIKVNSTAGKALHLDVCGACHPFYTGTQKIVDTGGRIDKFNKRFGALGKK</sequence>
<gene>
    <name evidence="1" type="primary">rpmE</name>
    <name type="ordered locus">Ssed_0536</name>
</gene>
<keyword id="KW-0479">Metal-binding</keyword>
<keyword id="KW-1185">Reference proteome</keyword>
<keyword id="KW-0687">Ribonucleoprotein</keyword>
<keyword id="KW-0689">Ribosomal protein</keyword>
<keyword id="KW-0694">RNA-binding</keyword>
<keyword id="KW-0699">rRNA-binding</keyword>
<keyword id="KW-0862">Zinc</keyword>
<feature type="chain" id="PRO_1000126736" description="Large ribosomal subunit protein bL31">
    <location>
        <begin position="1"/>
        <end position="70"/>
    </location>
</feature>
<feature type="binding site" evidence="1">
    <location>
        <position position="16"/>
    </location>
    <ligand>
        <name>Zn(2+)</name>
        <dbReference type="ChEBI" id="CHEBI:29105"/>
    </ligand>
</feature>
<feature type="binding site" evidence="1">
    <location>
        <position position="18"/>
    </location>
    <ligand>
        <name>Zn(2+)</name>
        <dbReference type="ChEBI" id="CHEBI:29105"/>
    </ligand>
</feature>
<feature type="binding site" evidence="1">
    <location>
        <position position="37"/>
    </location>
    <ligand>
        <name>Zn(2+)</name>
        <dbReference type="ChEBI" id="CHEBI:29105"/>
    </ligand>
</feature>
<feature type="binding site" evidence="1">
    <location>
        <position position="40"/>
    </location>
    <ligand>
        <name>Zn(2+)</name>
        <dbReference type="ChEBI" id="CHEBI:29105"/>
    </ligand>
</feature>
<evidence type="ECO:0000255" key="1">
    <source>
        <dbReference type="HAMAP-Rule" id="MF_00501"/>
    </source>
</evidence>
<evidence type="ECO:0000305" key="2"/>
<comment type="function">
    <text evidence="1">Binds the 23S rRNA.</text>
</comment>
<comment type="cofactor">
    <cofactor evidence="1">
        <name>Zn(2+)</name>
        <dbReference type="ChEBI" id="CHEBI:29105"/>
    </cofactor>
    <text evidence="1">Binds 1 zinc ion per subunit.</text>
</comment>
<comment type="subunit">
    <text evidence="1">Part of the 50S ribosomal subunit.</text>
</comment>
<comment type="similarity">
    <text evidence="1">Belongs to the bacterial ribosomal protein bL31 family. Type A subfamily.</text>
</comment>
<protein>
    <recommendedName>
        <fullName evidence="1">Large ribosomal subunit protein bL31</fullName>
    </recommendedName>
    <alternativeName>
        <fullName evidence="2">50S ribosomal protein L31</fullName>
    </alternativeName>
</protein>
<proteinExistence type="inferred from homology"/>
<name>RL31_SHESH</name>
<dbReference type="EMBL" id="CP000821">
    <property type="protein sequence ID" value="ABV35148.1"/>
    <property type="molecule type" value="Genomic_DNA"/>
</dbReference>
<dbReference type="RefSeq" id="WP_012140885.1">
    <property type="nucleotide sequence ID" value="NC_009831.1"/>
</dbReference>
<dbReference type="SMR" id="A8FQM5"/>
<dbReference type="STRING" id="425104.Ssed_0536"/>
<dbReference type="KEGG" id="sse:Ssed_0536"/>
<dbReference type="eggNOG" id="COG0254">
    <property type="taxonomic scope" value="Bacteria"/>
</dbReference>
<dbReference type="HOGENOM" id="CLU_114306_4_3_6"/>
<dbReference type="OrthoDB" id="9803251at2"/>
<dbReference type="Proteomes" id="UP000002015">
    <property type="component" value="Chromosome"/>
</dbReference>
<dbReference type="GO" id="GO:1990904">
    <property type="term" value="C:ribonucleoprotein complex"/>
    <property type="evidence" value="ECO:0007669"/>
    <property type="project" value="UniProtKB-KW"/>
</dbReference>
<dbReference type="GO" id="GO:0005840">
    <property type="term" value="C:ribosome"/>
    <property type="evidence" value="ECO:0007669"/>
    <property type="project" value="UniProtKB-KW"/>
</dbReference>
<dbReference type="GO" id="GO:0046872">
    <property type="term" value="F:metal ion binding"/>
    <property type="evidence" value="ECO:0007669"/>
    <property type="project" value="UniProtKB-KW"/>
</dbReference>
<dbReference type="GO" id="GO:0019843">
    <property type="term" value="F:rRNA binding"/>
    <property type="evidence" value="ECO:0007669"/>
    <property type="project" value="UniProtKB-KW"/>
</dbReference>
<dbReference type="GO" id="GO:0003735">
    <property type="term" value="F:structural constituent of ribosome"/>
    <property type="evidence" value="ECO:0007669"/>
    <property type="project" value="InterPro"/>
</dbReference>
<dbReference type="GO" id="GO:0006412">
    <property type="term" value="P:translation"/>
    <property type="evidence" value="ECO:0007669"/>
    <property type="project" value="UniProtKB-UniRule"/>
</dbReference>
<dbReference type="Gene3D" id="4.10.830.30">
    <property type="entry name" value="Ribosomal protein L31"/>
    <property type="match status" value="1"/>
</dbReference>
<dbReference type="HAMAP" id="MF_00501">
    <property type="entry name" value="Ribosomal_bL31_1"/>
    <property type="match status" value="1"/>
</dbReference>
<dbReference type="InterPro" id="IPR034704">
    <property type="entry name" value="Ribosomal_bL28/bL31-like_sf"/>
</dbReference>
<dbReference type="InterPro" id="IPR002150">
    <property type="entry name" value="Ribosomal_bL31"/>
</dbReference>
<dbReference type="InterPro" id="IPR027491">
    <property type="entry name" value="Ribosomal_bL31_A"/>
</dbReference>
<dbReference type="InterPro" id="IPR042105">
    <property type="entry name" value="Ribosomal_bL31_sf"/>
</dbReference>
<dbReference type="NCBIfam" id="TIGR00105">
    <property type="entry name" value="L31"/>
    <property type="match status" value="1"/>
</dbReference>
<dbReference type="NCBIfam" id="NF000612">
    <property type="entry name" value="PRK00019.1"/>
    <property type="match status" value="1"/>
</dbReference>
<dbReference type="NCBIfam" id="NF001809">
    <property type="entry name" value="PRK00528.1"/>
    <property type="match status" value="1"/>
</dbReference>
<dbReference type="PANTHER" id="PTHR33280">
    <property type="entry name" value="50S RIBOSOMAL PROTEIN L31, CHLOROPLASTIC"/>
    <property type="match status" value="1"/>
</dbReference>
<dbReference type="PANTHER" id="PTHR33280:SF6">
    <property type="entry name" value="LARGE RIBOSOMAL SUBUNIT PROTEIN BL31A"/>
    <property type="match status" value="1"/>
</dbReference>
<dbReference type="Pfam" id="PF01197">
    <property type="entry name" value="Ribosomal_L31"/>
    <property type="match status" value="1"/>
</dbReference>
<dbReference type="PRINTS" id="PR01249">
    <property type="entry name" value="RIBOSOMALL31"/>
</dbReference>
<dbReference type="SUPFAM" id="SSF143800">
    <property type="entry name" value="L28p-like"/>
    <property type="match status" value="1"/>
</dbReference>
<dbReference type="PROSITE" id="PS01143">
    <property type="entry name" value="RIBOSOMAL_L31"/>
    <property type="match status" value="1"/>
</dbReference>